<proteinExistence type="inferred from homology"/>
<name>CYSN_SALG2</name>
<organism>
    <name type="scientific">Salmonella gallinarum (strain 287/91 / NCTC 13346)</name>
    <dbReference type="NCBI Taxonomy" id="550538"/>
    <lineage>
        <taxon>Bacteria</taxon>
        <taxon>Pseudomonadati</taxon>
        <taxon>Pseudomonadota</taxon>
        <taxon>Gammaproteobacteria</taxon>
        <taxon>Enterobacterales</taxon>
        <taxon>Enterobacteriaceae</taxon>
        <taxon>Salmonella</taxon>
    </lineage>
</organism>
<evidence type="ECO:0000250" key="1"/>
<evidence type="ECO:0000255" key="2">
    <source>
        <dbReference type="HAMAP-Rule" id="MF_00062"/>
    </source>
</evidence>
<accession>B5RDQ7</accession>
<keyword id="KW-0067">ATP-binding</keyword>
<keyword id="KW-0342">GTP-binding</keyword>
<keyword id="KW-0547">Nucleotide-binding</keyword>
<keyword id="KW-0548">Nucleotidyltransferase</keyword>
<keyword id="KW-0808">Transferase</keyword>
<comment type="function">
    <text evidence="2">With CysD forms the ATP sulfurylase (ATPS) that catalyzes the adenylation of sulfate producing adenosine 5'-phosphosulfate (APS) and diphosphate, the first enzymatic step in sulfur assimilation pathway. APS synthesis involves the formation of a high-energy phosphoric-sulfuric acid anhydride bond driven by GTP hydrolysis by CysN coupled to ATP hydrolysis by CysD.</text>
</comment>
<comment type="catalytic activity">
    <reaction evidence="2">
        <text>sulfate + ATP + H(+) = adenosine 5'-phosphosulfate + diphosphate</text>
        <dbReference type="Rhea" id="RHEA:18133"/>
        <dbReference type="ChEBI" id="CHEBI:15378"/>
        <dbReference type="ChEBI" id="CHEBI:16189"/>
        <dbReference type="ChEBI" id="CHEBI:30616"/>
        <dbReference type="ChEBI" id="CHEBI:33019"/>
        <dbReference type="ChEBI" id="CHEBI:58243"/>
        <dbReference type="EC" id="2.7.7.4"/>
    </reaction>
</comment>
<comment type="pathway">
    <text evidence="2">Sulfur metabolism; hydrogen sulfide biosynthesis; sulfite from sulfate: step 1/3.</text>
</comment>
<comment type="subunit">
    <text evidence="2">Heterodimer composed of CysD, the smaller subunit, and CysN.</text>
</comment>
<comment type="similarity">
    <text evidence="2">Belongs to the TRAFAC class translation factor GTPase superfamily. Classic translation factor GTPase family. CysN/NodQ subfamily.</text>
</comment>
<feature type="chain" id="PRO_1000092154" description="Sulfate adenylyltransferase subunit 1">
    <location>
        <begin position="1"/>
        <end position="479"/>
    </location>
</feature>
<feature type="domain" description="tr-type G">
    <location>
        <begin position="25"/>
        <end position="239"/>
    </location>
</feature>
<feature type="region of interest" description="G1" evidence="1">
    <location>
        <begin position="34"/>
        <end position="41"/>
    </location>
</feature>
<feature type="region of interest" description="G2" evidence="1">
    <location>
        <begin position="92"/>
        <end position="96"/>
    </location>
</feature>
<feature type="region of interest" description="G3" evidence="1">
    <location>
        <begin position="113"/>
        <end position="116"/>
    </location>
</feature>
<feature type="region of interest" description="G4" evidence="1">
    <location>
        <begin position="168"/>
        <end position="171"/>
    </location>
</feature>
<feature type="region of interest" description="G5" evidence="1">
    <location>
        <begin position="206"/>
        <end position="208"/>
    </location>
</feature>
<feature type="binding site" evidence="2">
    <location>
        <begin position="34"/>
        <end position="41"/>
    </location>
    <ligand>
        <name>GTP</name>
        <dbReference type="ChEBI" id="CHEBI:37565"/>
    </ligand>
</feature>
<feature type="binding site" evidence="2">
    <location>
        <begin position="113"/>
        <end position="117"/>
    </location>
    <ligand>
        <name>GTP</name>
        <dbReference type="ChEBI" id="CHEBI:37565"/>
    </ligand>
</feature>
<feature type="binding site" evidence="2">
    <location>
        <begin position="168"/>
        <end position="171"/>
    </location>
    <ligand>
        <name>GTP</name>
        <dbReference type="ChEBI" id="CHEBI:37565"/>
    </ligand>
</feature>
<dbReference type="EC" id="2.7.7.4" evidence="2"/>
<dbReference type="EMBL" id="AM933173">
    <property type="protein sequence ID" value="CAR38645.1"/>
    <property type="molecule type" value="Genomic_DNA"/>
</dbReference>
<dbReference type="RefSeq" id="WP_001092262.1">
    <property type="nucleotide sequence ID" value="NC_011274.1"/>
</dbReference>
<dbReference type="SMR" id="B5RDQ7"/>
<dbReference type="KEGG" id="seg:SG2837"/>
<dbReference type="HOGENOM" id="CLU_007265_5_2_6"/>
<dbReference type="UniPathway" id="UPA00140">
    <property type="reaction ID" value="UER00204"/>
</dbReference>
<dbReference type="Proteomes" id="UP000008321">
    <property type="component" value="Chromosome"/>
</dbReference>
<dbReference type="GO" id="GO:0005524">
    <property type="term" value="F:ATP binding"/>
    <property type="evidence" value="ECO:0007669"/>
    <property type="project" value="UniProtKB-KW"/>
</dbReference>
<dbReference type="GO" id="GO:0005525">
    <property type="term" value="F:GTP binding"/>
    <property type="evidence" value="ECO:0007669"/>
    <property type="project" value="UniProtKB-UniRule"/>
</dbReference>
<dbReference type="GO" id="GO:0003924">
    <property type="term" value="F:GTPase activity"/>
    <property type="evidence" value="ECO:0007669"/>
    <property type="project" value="InterPro"/>
</dbReference>
<dbReference type="GO" id="GO:0004781">
    <property type="term" value="F:sulfate adenylyltransferase (ATP) activity"/>
    <property type="evidence" value="ECO:0007669"/>
    <property type="project" value="UniProtKB-UniRule"/>
</dbReference>
<dbReference type="GO" id="GO:0070814">
    <property type="term" value="P:hydrogen sulfide biosynthetic process"/>
    <property type="evidence" value="ECO:0007669"/>
    <property type="project" value="UniProtKB-UniRule"/>
</dbReference>
<dbReference type="GO" id="GO:0000103">
    <property type="term" value="P:sulfate assimilation"/>
    <property type="evidence" value="ECO:0007669"/>
    <property type="project" value="UniProtKB-UniRule"/>
</dbReference>
<dbReference type="CDD" id="cd04166">
    <property type="entry name" value="CysN_ATPS"/>
    <property type="match status" value="1"/>
</dbReference>
<dbReference type="CDD" id="cd03695">
    <property type="entry name" value="CysN_NodQ_II"/>
    <property type="match status" value="1"/>
</dbReference>
<dbReference type="CDD" id="cd04095">
    <property type="entry name" value="CysN_NoDQ_III"/>
    <property type="match status" value="1"/>
</dbReference>
<dbReference type="FunFam" id="2.40.30.10:FF:000027">
    <property type="entry name" value="Sulfate adenylyltransferase subunit 1"/>
    <property type="match status" value="1"/>
</dbReference>
<dbReference type="FunFam" id="2.40.30.10:FF:000031">
    <property type="entry name" value="Sulfate adenylyltransferase subunit 1"/>
    <property type="match status" value="1"/>
</dbReference>
<dbReference type="FunFam" id="3.40.50.300:FF:000119">
    <property type="entry name" value="Sulfate adenylyltransferase subunit 1"/>
    <property type="match status" value="1"/>
</dbReference>
<dbReference type="Gene3D" id="3.40.50.300">
    <property type="entry name" value="P-loop containing nucleotide triphosphate hydrolases"/>
    <property type="match status" value="1"/>
</dbReference>
<dbReference type="Gene3D" id="2.40.30.10">
    <property type="entry name" value="Translation factors"/>
    <property type="match status" value="2"/>
</dbReference>
<dbReference type="HAMAP" id="MF_00062">
    <property type="entry name" value="Sulf_adenylyltr_sub1"/>
    <property type="match status" value="1"/>
</dbReference>
<dbReference type="InterPro" id="IPR041757">
    <property type="entry name" value="CysN_GTP-bd"/>
</dbReference>
<dbReference type="InterPro" id="IPR044138">
    <property type="entry name" value="CysN_II"/>
</dbReference>
<dbReference type="InterPro" id="IPR044139">
    <property type="entry name" value="CysN_NoDQ_III"/>
</dbReference>
<dbReference type="InterPro" id="IPR031157">
    <property type="entry name" value="G_TR_CS"/>
</dbReference>
<dbReference type="InterPro" id="IPR054696">
    <property type="entry name" value="GTP-eEF1A_C"/>
</dbReference>
<dbReference type="InterPro" id="IPR027417">
    <property type="entry name" value="P-loop_NTPase"/>
</dbReference>
<dbReference type="InterPro" id="IPR005225">
    <property type="entry name" value="Small_GTP-bd"/>
</dbReference>
<dbReference type="InterPro" id="IPR011779">
    <property type="entry name" value="SO4_adenylTrfase_lsu"/>
</dbReference>
<dbReference type="InterPro" id="IPR000795">
    <property type="entry name" value="T_Tr_GTP-bd_dom"/>
</dbReference>
<dbReference type="InterPro" id="IPR050100">
    <property type="entry name" value="TRAFAC_GTPase_members"/>
</dbReference>
<dbReference type="InterPro" id="IPR009000">
    <property type="entry name" value="Transl_B-barrel_sf"/>
</dbReference>
<dbReference type="InterPro" id="IPR009001">
    <property type="entry name" value="Transl_elong_EF1A/Init_IF2_C"/>
</dbReference>
<dbReference type="NCBIfam" id="TIGR02034">
    <property type="entry name" value="CysN"/>
    <property type="match status" value="1"/>
</dbReference>
<dbReference type="NCBIfam" id="NF003478">
    <property type="entry name" value="PRK05124.1"/>
    <property type="match status" value="1"/>
</dbReference>
<dbReference type="NCBIfam" id="TIGR00231">
    <property type="entry name" value="small_GTP"/>
    <property type="match status" value="1"/>
</dbReference>
<dbReference type="PANTHER" id="PTHR23115">
    <property type="entry name" value="TRANSLATION FACTOR"/>
    <property type="match status" value="1"/>
</dbReference>
<dbReference type="Pfam" id="PF22594">
    <property type="entry name" value="GTP-eEF1A_C"/>
    <property type="match status" value="1"/>
</dbReference>
<dbReference type="Pfam" id="PF00009">
    <property type="entry name" value="GTP_EFTU"/>
    <property type="match status" value="1"/>
</dbReference>
<dbReference type="PRINTS" id="PR00315">
    <property type="entry name" value="ELONGATNFCT"/>
</dbReference>
<dbReference type="SUPFAM" id="SSF50465">
    <property type="entry name" value="EF-Tu/eEF-1alpha/eIF2-gamma C-terminal domain"/>
    <property type="match status" value="1"/>
</dbReference>
<dbReference type="SUPFAM" id="SSF52540">
    <property type="entry name" value="P-loop containing nucleoside triphosphate hydrolases"/>
    <property type="match status" value="1"/>
</dbReference>
<dbReference type="SUPFAM" id="SSF50447">
    <property type="entry name" value="Translation proteins"/>
    <property type="match status" value="1"/>
</dbReference>
<dbReference type="PROSITE" id="PS00301">
    <property type="entry name" value="G_TR_1"/>
    <property type="match status" value="1"/>
</dbReference>
<dbReference type="PROSITE" id="PS51722">
    <property type="entry name" value="G_TR_2"/>
    <property type="match status" value="1"/>
</dbReference>
<gene>
    <name evidence="2" type="primary">cysN</name>
    <name type="ordered locus">SG2837</name>
</gene>
<sequence>MNTILAQQIANEGGVEAWMIAQQHKSLLRFLTCGSVDDGKSTLIGRLLHDTLQIYEDQLSSLHNDSKRHGTQGEKLDLALLVDGLQAEREQGITIDVAYRYFSTEKRKFIIADTPGHEQYTRNMATGASTCDLAILLIDARKGVLDQTRRHSFISTLLGVKHLVVAINKMDLVDYCEETFARIREDYLTFAEQLPGDLDIRFVPLSALEGDNVAAQSANMRWYSGPTLLEVLETVDIQRAVDRQPMRFPVQYVNRPNLDFRGYAGTLASGSVKVGERIKVLPSGVESSVARIVTFDGDKEEACAGEAITLVLNDDIDISRGDLLLAANETLAPARHAAIDVVWMAEQPLAPGQSYDVKLAGKKTRARIEAIRYQIDINNLTQRDVESLPLNGIGLVEMTFDEPLALDIYQQNPVTGGLIFIDRLSNVTVGAGMVRELDERGATPPVEYSAFELELNALVRRHFPHWDARDLLGDKHGAA</sequence>
<protein>
    <recommendedName>
        <fullName evidence="2">Sulfate adenylyltransferase subunit 1</fullName>
        <ecNumber evidence="2">2.7.7.4</ecNumber>
    </recommendedName>
    <alternativeName>
        <fullName evidence="2">ATP-sulfurylase large subunit</fullName>
    </alternativeName>
    <alternativeName>
        <fullName evidence="2">Sulfate adenylate transferase</fullName>
        <shortName evidence="2">SAT</shortName>
    </alternativeName>
</protein>
<reference key="1">
    <citation type="journal article" date="2008" name="Genome Res.">
        <title>Comparative genome analysis of Salmonella enteritidis PT4 and Salmonella gallinarum 287/91 provides insights into evolutionary and host adaptation pathways.</title>
        <authorList>
            <person name="Thomson N.R."/>
            <person name="Clayton D.J."/>
            <person name="Windhorst D."/>
            <person name="Vernikos G."/>
            <person name="Davidson S."/>
            <person name="Churcher C."/>
            <person name="Quail M.A."/>
            <person name="Stevens M."/>
            <person name="Jones M.A."/>
            <person name="Watson M."/>
            <person name="Barron A."/>
            <person name="Layton A."/>
            <person name="Pickard D."/>
            <person name="Kingsley R.A."/>
            <person name="Bignell A."/>
            <person name="Clark L."/>
            <person name="Harris B."/>
            <person name="Ormond D."/>
            <person name="Abdellah Z."/>
            <person name="Brooks K."/>
            <person name="Cherevach I."/>
            <person name="Chillingworth T."/>
            <person name="Woodward J."/>
            <person name="Norberczak H."/>
            <person name="Lord A."/>
            <person name="Arrowsmith C."/>
            <person name="Jagels K."/>
            <person name="Moule S."/>
            <person name="Mungall K."/>
            <person name="Saunders M."/>
            <person name="Whitehead S."/>
            <person name="Chabalgoity J.A."/>
            <person name="Maskell D."/>
            <person name="Humphreys T."/>
            <person name="Roberts M."/>
            <person name="Barrow P.A."/>
            <person name="Dougan G."/>
            <person name="Parkhill J."/>
        </authorList>
    </citation>
    <scope>NUCLEOTIDE SEQUENCE [LARGE SCALE GENOMIC DNA]</scope>
    <source>
        <strain>287/91 / NCTC 13346</strain>
    </source>
</reference>